<gene>
    <name evidence="1" type="primary">rplB</name>
    <name type="ordered locus">Daro_0322</name>
</gene>
<sequence length="275" mass="29950">MALVKVKPTSPGRRGVVQVVNASLHKGKPFAALVEAKSGNAGRNNNGRITVRHQGGGHKQAYRVIDFKRNKDGIPAKVERLEYDPNRTANIALLCYADGERRYIIANKGMVVGQPIMSGSEAPIKSGNALPIRNIPVGTTICCVEMLPGKGAQLARSAGTSVQLLAREGTYAQIRLRSGEVRRVHVECRATIGEVGNEEHNLRKIGKAGAMRWRGVRPTVRGTAMNPVDHPHGGGEGRTGEGRVPVNPWGQPTKGYRTRSNKRTNSMIVQRRHKR</sequence>
<keyword id="KW-0687">Ribonucleoprotein</keyword>
<keyword id="KW-0689">Ribosomal protein</keyword>
<keyword id="KW-0694">RNA-binding</keyword>
<keyword id="KW-0699">rRNA-binding</keyword>
<reference key="1">
    <citation type="journal article" date="2009" name="BMC Genomics">
        <title>Metabolic analysis of the soil microbe Dechloromonas aromatica str. RCB: indications of a surprisingly complex life-style and cryptic anaerobic pathways for aromatic degradation.</title>
        <authorList>
            <person name="Salinero K.K."/>
            <person name="Keller K."/>
            <person name="Feil W.S."/>
            <person name="Feil H."/>
            <person name="Trong S."/>
            <person name="Di Bartolo G."/>
            <person name="Lapidus A."/>
        </authorList>
    </citation>
    <scope>NUCLEOTIDE SEQUENCE [LARGE SCALE GENOMIC DNA]</scope>
    <source>
        <strain>RCB</strain>
    </source>
</reference>
<comment type="function">
    <text evidence="1">One of the primary rRNA binding proteins. Required for association of the 30S and 50S subunits to form the 70S ribosome, for tRNA binding and peptide bond formation. It has been suggested to have peptidyltransferase activity; this is somewhat controversial. Makes several contacts with the 16S rRNA in the 70S ribosome.</text>
</comment>
<comment type="subunit">
    <text evidence="1">Part of the 50S ribosomal subunit. Forms a bridge to the 30S subunit in the 70S ribosome.</text>
</comment>
<comment type="similarity">
    <text evidence="1">Belongs to the universal ribosomal protein uL2 family.</text>
</comment>
<dbReference type="EMBL" id="CP000089">
    <property type="protein sequence ID" value="AAZ45081.1"/>
    <property type="molecule type" value="Genomic_DNA"/>
</dbReference>
<dbReference type="SMR" id="Q47JA0"/>
<dbReference type="STRING" id="159087.Daro_0322"/>
<dbReference type="KEGG" id="dar:Daro_0322"/>
<dbReference type="eggNOG" id="COG0090">
    <property type="taxonomic scope" value="Bacteria"/>
</dbReference>
<dbReference type="HOGENOM" id="CLU_036235_2_1_4"/>
<dbReference type="OrthoDB" id="9778722at2"/>
<dbReference type="GO" id="GO:0015934">
    <property type="term" value="C:large ribosomal subunit"/>
    <property type="evidence" value="ECO:0007669"/>
    <property type="project" value="InterPro"/>
</dbReference>
<dbReference type="GO" id="GO:0019843">
    <property type="term" value="F:rRNA binding"/>
    <property type="evidence" value="ECO:0007669"/>
    <property type="project" value="UniProtKB-UniRule"/>
</dbReference>
<dbReference type="GO" id="GO:0003735">
    <property type="term" value="F:structural constituent of ribosome"/>
    <property type="evidence" value="ECO:0007669"/>
    <property type="project" value="InterPro"/>
</dbReference>
<dbReference type="GO" id="GO:0016740">
    <property type="term" value="F:transferase activity"/>
    <property type="evidence" value="ECO:0007669"/>
    <property type="project" value="InterPro"/>
</dbReference>
<dbReference type="GO" id="GO:0002181">
    <property type="term" value="P:cytoplasmic translation"/>
    <property type="evidence" value="ECO:0007669"/>
    <property type="project" value="TreeGrafter"/>
</dbReference>
<dbReference type="FunFam" id="2.30.30.30:FF:000001">
    <property type="entry name" value="50S ribosomal protein L2"/>
    <property type="match status" value="1"/>
</dbReference>
<dbReference type="FunFam" id="2.40.50.140:FF:000003">
    <property type="entry name" value="50S ribosomal protein L2"/>
    <property type="match status" value="1"/>
</dbReference>
<dbReference type="FunFam" id="4.10.950.10:FF:000001">
    <property type="entry name" value="50S ribosomal protein L2"/>
    <property type="match status" value="1"/>
</dbReference>
<dbReference type="Gene3D" id="2.30.30.30">
    <property type="match status" value="1"/>
</dbReference>
<dbReference type="Gene3D" id="2.40.50.140">
    <property type="entry name" value="Nucleic acid-binding proteins"/>
    <property type="match status" value="1"/>
</dbReference>
<dbReference type="Gene3D" id="4.10.950.10">
    <property type="entry name" value="Ribosomal protein L2, domain 3"/>
    <property type="match status" value="1"/>
</dbReference>
<dbReference type="HAMAP" id="MF_01320_B">
    <property type="entry name" value="Ribosomal_uL2_B"/>
    <property type="match status" value="1"/>
</dbReference>
<dbReference type="InterPro" id="IPR012340">
    <property type="entry name" value="NA-bd_OB-fold"/>
</dbReference>
<dbReference type="InterPro" id="IPR014722">
    <property type="entry name" value="Rib_uL2_dom2"/>
</dbReference>
<dbReference type="InterPro" id="IPR002171">
    <property type="entry name" value="Ribosomal_uL2"/>
</dbReference>
<dbReference type="InterPro" id="IPR005880">
    <property type="entry name" value="Ribosomal_uL2_bac/org-type"/>
</dbReference>
<dbReference type="InterPro" id="IPR022669">
    <property type="entry name" value="Ribosomal_uL2_C"/>
</dbReference>
<dbReference type="InterPro" id="IPR022671">
    <property type="entry name" value="Ribosomal_uL2_CS"/>
</dbReference>
<dbReference type="InterPro" id="IPR014726">
    <property type="entry name" value="Ribosomal_uL2_dom3"/>
</dbReference>
<dbReference type="InterPro" id="IPR022666">
    <property type="entry name" value="Ribosomal_uL2_RNA-bd_dom"/>
</dbReference>
<dbReference type="InterPro" id="IPR008991">
    <property type="entry name" value="Translation_prot_SH3-like_sf"/>
</dbReference>
<dbReference type="NCBIfam" id="TIGR01171">
    <property type="entry name" value="rplB_bact"/>
    <property type="match status" value="1"/>
</dbReference>
<dbReference type="PANTHER" id="PTHR13691:SF5">
    <property type="entry name" value="LARGE RIBOSOMAL SUBUNIT PROTEIN UL2M"/>
    <property type="match status" value="1"/>
</dbReference>
<dbReference type="PANTHER" id="PTHR13691">
    <property type="entry name" value="RIBOSOMAL PROTEIN L2"/>
    <property type="match status" value="1"/>
</dbReference>
<dbReference type="Pfam" id="PF00181">
    <property type="entry name" value="Ribosomal_L2"/>
    <property type="match status" value="1"/>
</dbReference>
<dbReference type="Pfam" id="PF03947">
    <property type="entry name" value="Ribosomal_L2_C"/>
    <property type="match status" value="1"/>
</dbReference>
<dbReference type="PIRSF" id="PIRSF002158">
    <property type="entry name" value="Ribosomal_L2"/>
    <property type="match status" value="1"/>
</dbReference>
<dbReference type="SMART" id="SM01383">
    <property type="entry name" value="Ribosomal_L2"/>
    <property type="match status" value="1"/>
</dbReference>
<dbReference type="SMART" id="SM01382">
    <property type="entry name" value="Ribosomal_L2_C"/>
    <property type="match status" value="1"/>
</dbReference>
<dbReference type="SUPFAM" id="SSF50249">
    <property type="entry name" value="Nucleic acid-binding proteins"/>
    <property type="match status" value="1"/>
</dbReference>
<dbReference type="SUPFAM" id="SSF50104">
    <property type="entry name" value="Translation proteins SH3-like domain"/>
    <property type="match status" value="1"/>
</dbReference>
<dbReference type="PROSITE" id="PS00467">
    <property type="entry name" value="RIBOSOMAL_L2"/>
    <property type="match status" value="1"/>
</dbReference>
<accession>Q47JA0</accession>
<proteinExistence type="inferred from homology"/>
<organism>
    <name type="scientific">Dechloromonas aromatica (strain RCB)</name>
    <dbReference type="NCBI Taxonomy" id="159087"/>
    <lineage>
        <taxon>Bacteria</taxon>
        <taxon>Pseudomonadati</taxon>
        <taxon>Pseudomonadota</taxon>
        <taxon>Betaproteobacteria</taxon>
        <taxon>Rhodocyclales</taxon>
        <taxon>Azonexaceae</taxon>
        <taxon>Dechloromonas</taxon>
    </lineage>
</organism>
<name>RL2_DECAR</name>
<protein>
    <recommendedName>
        <fullName evidence="1">Large ribosomal subunit protein uL2</fullName>
    </recommendedName>
    <alternativeName>
        <fullName evidence="3">50S ribosomal protein L2</fullName>
    </alternativeName>
</protein>
<feature type="chain" id="PRO_0000237176" description="Large ribosomal subunit protein uL2">
    <location>
        <begin position="1"/>
        <end position="275"/>
    </location>
</feature>
<feature type="region of interest" description="Disordered" evidence="2">
    <location>
        <begin position="221"/>
        <end position="275"/>
    </location>
</feature>
<feature type="compositionally biased region" description="Basic and acidic residues" evidence="2">
    <location>
        <begin position="229"/>
        <end position="241"/>
    </location>
</feature>
<evidence type="ECO:0000255" key="1">
    <source>
        <dbReference type="HAMAP-Rule" id="MF_01320"/>
    </source>
</evidence>
<evidence type="ECO:0000256" key="2">
    <source>
        <dbReference type="SAM" id="MobiDB-lite"/>
    </source>
</evidence>
<evidence type="ECO:0000305" key="3"/>